<name>PSUG_NOCSJ</name>
<protein>
    <recommendedName>
        <fullName evidence="1">Pseudouridine-5'-phosphate glycosidase</fullName>
        <shortName evidence="1">PsiMP glycosidase</shortName>
        <ecNumber evidence="1">4.2.1.70</ecNumber>
    </recommendedName>
</protein>
<keyword id="KW-0326">Glycosidase</keyword>
<keyword id="KW-0378">Hydrolase</keyword>
<keyword id="KW-0456">Lyase</keyword>
<keyword id="KW-0464">Manganese</keyword>
<keyword id="KW-0479">Metal-binding</keyword>
<keyword id="KW-1185">Reference proteome</keyword>
<accession>A1SQN1</accession>
<sequence>MTAPHPLLTLTDEVADALRDGAPVVALESTIISHGMPYPQNVAMATEVEGIIRAAGAVPATIAVLEGRPRIGLTADDLELLASDEDVAKVSVRDLPFVVARRSHGATTVAATMRLAALAGIRVFVTGGLGGVHRGAQQSFDESADLTELGSTDVAVISAGVKSILDIGLTLERLETLGVPVLAYGSDEFPSFYSRSSGHAAPMRVDSAAEVAAVMAAKWDLGIAGGVVVANPIPEADEIPADEIGGIIEQALADMAARGIHGNEATPYLLGRIVEITGGASLTANIALVRANARLGASIAREYAGLR</sequence>
<comment type="function">
    <text evidence="1">Catalyzes the reversible cleavage of pseudouridine 5'-phosphate (PsiMP) to ribose 5-phosphate and uracil. Functions biologically in the cleavage direction, as part of a pseudouridine degradation pathway.</text>
</comment>
<comment type="catalytic activity">
    <reaction evidence="1">
        <text>D-ribose 5-phosphate + uracil = psi-UMP + H2O</text>
        <dbReference type="Rhea" id="RHEA:18337"/>
        <dbReference type="ChEBI" id="CHEBI:15377"/>
        <dbReference type="ChEBI" id="CHEBI:17568"/>
        <dbReference type="ChEBI" id="CHEBI:58380"/>
        <dbReference type="ChEBI" id="CHEBI:78346"/>
        <dbReference type="EC" id="4.2.1.70"/>
    </reaction>
</comment>
<comment type="cofactor">
    <cofactor evidence="1">
        <name>Mn(2+)</name>
        <dbReference type="ChEBI" id="CHEBI:29035"/>
    </cofactor>
    <text evidence="1">Binds 1 Mn(2+) ion per subunit.</text>
</comment>
<comment type="subunit">
    <text evidence="1">Homotrimer.</text>
</comment>
<comment type="similarity">
    <text evidence="1">Belongs to the pseudouridine-5'-phosphate glycosidase family.</text>
</comment>
<proteinExistence type="inferred from homology"/>
<reference key="1">
    <citation type="submission" date="2006-12" db="EMBL/GenBank/DDBJ databases">
        <title>Complete sequence of chromosome 1 of Nocardioides sp. JS614.</title>
        <authorList>
            <person name="Copeland A."/>
            <person name="Lucas S."/>
            <person name="Lapidus A."/>
            <person name="Barry K."/>
            <person name="Detter J.C."/>
            <person name="Glavina del Rio T."/>
            <person name="Hammon N."/>
            <person name="Israni S."/>
            <person name="Dalin E."/>
            <person name="Tice H."/>
            <person name="Pitluck S."/>
            <person name="Thompson L.S."/>
            <person name="Brettin T."/>
            <person name="Bruce D."/>
            <person name="Han C."/>
            <person name="Tapia R."/>
            <person name="Schmutz J."/>
            <person name="Larimer F."/>
            <person name="Land M."/>
            <person name="Hauser L."/>
            <person name="Kyrpides N."/>
            <person name="Kim E."/>
            <person name="Mattes T."/>
            <person name="Gossett J."/>
            <person name="Richardson P."/>
        </authorList>
    </citation>
    <scope>NUCLEOTIDE SEQUENCE [LARGE SCALE GENOMIC DNA]</scope>
    <source>
        <strain>ATCC BAA-499 / JS614</strain>
    </source>
</reference>
<feature type="chain" id="PRO_0000390532" description="Pseudouridine-5'-phosphate glycosidase">
    <location>
        <begin position="1"/>
        <end position="307"/>
    </location>
</feature>
<feature type="active site" description="Proton donor" evidence="1">
    <location>
        <position position="28"/>
    </location>
</feature>
<feature type="active site" description="Nucleophile" evidence="1">
    <location>
        <position position="162"/>
    </location>
</feature>
<feature type="binding site" evidence="1">
    <location>
        <position position="89"/>
    </location>
    <ligand>
        <name>substrate</name>
    </ligand>
</feature>
<feature type="binding site" evidence="1">
    <location>
        <position position="109"/>
    </location>
    <ligand>
        <name>substrate</name>
    </ligand>
</feature>
<feature type="binding site" evidence="1">
    <location>
        <position position="141"/>
    </location>
    <ligand>
        <name>Mn(2+)</name>
        <dbReference type="ChEBI" id="CHEBI:29035"/>
    </ligand>
</feature>
<feature type="binding site" evidence="1">
    <location>
        <begin position="143"/>
        <end position="145"/>
    </location>
    <ligand>
        <name>substrate</name>
    </ligand>
</feature>
<evidence type="ECO:0000255" key="1">
    <source>
        <dbReference type="HAMAP-Rule" id="MF_01876"/>
    </source>
</evidence>
<dbReference type="EC" id="4.2.1.70" evidence="1"/>
<dbReference type="EMBL" id="CP000509">
    <property type="protein sequence ID" value="ABL84116.1"/>
    <property type="molecule type" value="Genomic_DNA"/>
</dbReference>
<dbReference type="RefSeq" id="WP_011758044.1">
    <property type="nucleotide sequence ID" value="NC_008699.1"/>
</dbReference>
<dbReference type="SMR" id="A1SQN1"/>
<dbReference type="STRING" id="196162.Noca_4621"/>
<dbReference type="KEGG" id="nca:Noca_4621"/>
<dbReference type="eggNOG" id="COG2313">
    <property type="taxonomic scope" value="Bacteria"/>
</dbReference>
<dbReference type="HOGENOM" id="CLU_012201_0_1_11"/>
<dbReference type="OrthoDB" id="9805870at2"/>
<dbReference type="Proteomes" id="UP000000640">
    <property type="component" value="Chromosome"/>
</dbReference>
<dbReference type="GO" id="GO:0005737">
    <property type="term" value="C:cytoplasm"/>
    <property type="evidence" value="ECO:0007669"/>
    <property type="project" value="TreeGrafter"/>
</dbReference>
<dbReference type="GO" id="GO:0016798">
    <property type="term" value="F:hydrolase activity, acting on glycosyl bonds"/>
    <property type="evidence" value="ECO:0007669"/>
    <property type="project" value="UniProtKB-KW"/>
</dbReference>
<dbReference type="GO" id="GO:0046872">
    <property type="term" value="F:metal ion binding"/>
    <property type="evidence" value="ECO:0007669"/>
    <property type="project" value="UniProtKB-KW"/>
</dbReference>
<dbReference type="GO" id="GO:0004730">
    <property type="term" value="F:pseudouridylate synthase activity"/>
    <property type="evidence" value="ECO:0007669"/>
    <property type="project" value="UniProtKB-UniRule"/>
</dbReference>
<dbReference type="GO" id="GO:0046113">
    <property type="term" value="P:nucleobase catabolic process"/>
    <property type="evidence" value="ECO:0007669"/>
    <property type="project" value="UniProtKB-UniRule"/>
</dbReference>
<dbReference type="Gene3D" id="3.40.1790.10">
    <property type="entry name" value="Indigoidine synthase domain"/>
    <property type="match status" value="1"/>
</dbReference>
<dbReference type="HAMAP" id="MF_01876">
    <property type="entry name" value="PsiMP_glycosidase"/>
    <property type="match status" value="1"/>
</dbReference>
<dbReference type="InterPro" id="IPR022830">
    <property type="entry name" value="Indigdn_synthA-like"/>
</dbReference>
<dbReference type="InterPro" id="IPR007342">
    <property type="entry name" value="PsuG"/>
</dbReference>
<dbReference type="PANTHER" id="PTHR42909:SF1">
    <property type="entry name" value="CARBOHYDRATE KINASE PFKB DOMAIN-CONTAINING PROTEIN"/>
    <property type="match status" value="1"/>
</dbReference>
<dbReference type="PANTHER" id="PTHR42909">
    <property type="entry name" value="ZGC:136858"/>
    <property type="match status" value="1"/>
</dbReference>
<dbReference type="Pfam" id="PF04227">
    <property type="entry name" value="Indigoidine_A"/>
    <property type="match status" value="1"/>
</dbReference>
<dbReference type="SUPFAM" id="SSF110581">
    <property type="entry name" value="Indigoidine synthase A-like"/>
    <property type="match status" value="1"/>
</dbReference>
<gene>
    <name evidence="1" type="primary">psuG</name>
    <name type="ordered locus">Noca_4621</name>
</gene>
<organism>
    <name type="scientific">Nocardioides sp. (strain ATCC BAA-499 / JS614)</name>
    <dbReference type="NCBI Taxonomy" id="196162"/>
    <lineage>
        <taxon>Bacteria</taxon>
        <taxon>Bacillati</taxon>
        <taxon>Actinomycetota</taxon>
        <taxon>Actinomycetes</taxon>
        <taxon>Propionibacteriales</taxon>
        <taxon>Nocardioidaceae</taxon>
        <taxon>Nocardioides</taxon>
    </lineage>
</organism>